<dbReference type="EMBL" id="AP009240">
    <property type="protein sequence ID" value="BAG75794.1"/>
    <property type="molecule type" value="Genomic_DNA"/>
</dbReference>
<dbReference type="RefSeq" id="WP_001054379.1">
    <property type="nucleotide sequence ID" value="NC_011415.1"/>
</dbReference>
<dbReference type="KEGG" id="ecy:ECSE_0270"/>
<dbReference type="HOGENOM" id="CLU_164736_0_0_6"/>
<dbReference type="Proteomes" id="UP000008199">
    <property type="component" value="Chromosome"/>
</dbReference>
<dbReference type="HAMAP" id="MF_00827">
    <property type="entry name" value="UPF0386"/>
    <property type="match status" value="1"/>
</dbReference>
<dbReference type="InterPro" id="IPR018654">
    <property type="entry name" value="YjhX_toxin"/>
</dbReference>
<dbReference type="NCBIfam" id="NF010240">
    <property type="entry name" value="PRK13687.1"/>
    <property type="match status" value="1"/>
</dbReference>
<dbReference type="Pfam" id="PF09857">
    <property type="entry name" value="YjhX_toxin"/>
    <property type="match status" value="1"/>
</dbReference>
<evidence type="ECO:0000255" key="1">
    <source>
        <dbReference type="HAMAP-Rule" id="MF_00827"/>
    </source>
</evidence>
<accession>B6I030</accession>
<name>YJHX_ECOSE</name>
<gene>
    <name evidence="1" type="primary">yjhX</name>
    <name type="ordered locus">ECSE_0270</name>
</gene>
<comment type="similarity">
    <text evidence="1">Belongs to the UPF0386 family.</text>
</comment>
<organism>
    <name type="scientific">Escherichia coli (strain SE11)</name>
    <dbReference type="NCBI Taxonomy" id="409438"/>
    <lineage>
        <taxon>Bacteria</taxon>
        <taxon>Pseudomonadati</taxon>
        <taxon>Pseudomonadota</taxon>
        <taxon>Gammaproteobacteria</taxon>
        <taxon>Enterobacterales</taxon>
        <taxon>Enterobacteriaceae</taxon>
        <taxon>Escherichia</taxon>
    </lineage>
</organism>
<protein>
    <recommendedName>
        <fullName evidence="1">UPF0386 protein YjhX</fullName>
    </recommendedName>
</protein>
<proteinExistence type="inferred from homology"/>
<feature type="chain" id="PRO_1000200701" description="UPF0386 protein YjhX">
    <location>
        <begin position="1"/>
        <end position="85"/>
    </location>
</feature>
<sequence>MNLSRQEQRTLHVLAKGGRIAHVRDSSGRVTSVECYSREGLLLTDCTLAVFKKLKTKKLIKSVNGQPYRINTTGLNNVRAQLDNR</sequence>
<reference key="1">
    <citation type="journal article" date="2008" name="DNA Res.">
        <title>Complete genome sequence and comparative analysis of the wild-type commensal Escherichia coli strain SE11 isolated from a healthy adult.</title>
        <authorList>
            <person name="Oshima K."/>
            <person name="Toh H."/>
            <person name="Ogura Y."/>
            <person name="Sasamoto H."/>
            <person name="Morita H."/>
            <person name="Park S.-H."/>
            <person name="Ooka T."/>
            <person name="Iyoda S."/>
            <person name="Taylor T.D."/>
            <person name="Hayashi T."/>
            <person name="Itoh K."/>
            <person name="Hattori M."/>
        </authorList>
    </citation>
    <scope>NUCLEOTIDE SEQUENCE [LARGE SCALE GENOMIC DNA]</scope>
    <source>
        <strain>SE11</strain>
    </source>
</reference>